<dbReference type="EC" id="1.4.4.2" evidence="1"/>
<dbReference type="EMBL" id="BA000011">
    <property type="protein sequence ID" value="BAB59442.1"/>
    <property type="molecule type" value="Genomic_DNA"/>
</dbReference>
<dbReference type="RefSeq" id="WP_010916555.1">
    <property type="nucleotide sequence ID" value="NC_002689.2"/>
</dbReference>
<dbReference type="SMR" id="Q97C05"/>
<dbReference type="STRING" id="273116.gene:9381074"/>
<dbReference type="PaxDb" id="273116-14324515"/>
<dbReference type="GeneID" id="1440813"/>
<dbReference type="KEGG" id="tvo:TVG0309943"/>
<dbReference type="eggNOG" id="arCOG00077">
    <property type="taxonomic scope" value="Archaea"/>
</dbReference>
<dbReference type="HOGENOM" id="CLU_004620_0_2_2"/>
<dbReference type="OrthoDB" id="17655at2157"/>
<dbReference type="PhylomeDB" id="Q97C05"/>
<dbReference type="Proteomes" id="UP000001017">
    <property type="component" value="Chromosome"/>
</dbReference>
<dbReference type="GO" id="GO:0004375">
    <property type="term" value="F:glycine dehydrogenase (decarboxylating) activity"/>
    <property type="evidence" value="ECO:0007669"/>
    <property type="project" value="UniProtKB-EC"/>
</dbReference>
<dbReference type="GO" id="GO:0019464">
    <property type="term" value="P:glycine decarboxylation via glycine cleavage system"/>
    <property type="evidence" value="ECO:0007669"/>
    <property type="project" value="UniProtKB-UniRule"/>
</dbReference>
<dbReference type="GO" id="GO:0009116">
    <property type="term" value="P:nucleoside metabolic process"/>
    <property type="evidence" value="ECO:0007669"/>
    <property type="project" value="InterPro"/>
</dbReference>
<dbReference type="Gene3D" id="3.90.1150.10">
    <property type="entry name" value="Aspartate Aminotransferase, domain 1"/>
    <property type="match status" value="1"/>
</dbReference>
<dbReference type="Gene3D" id="3.40.640.10">
    <property type="entry name" value="Type I PLP-dependent aspartate aminotransferase-like (Major domain)"/>
    <property type="match status" value="1"/>
</dbReference>
<dbReference type="HAMAP" id="MF_00712">
    <property type="entry name" value="GcvPA"/>
    <property type="match status" value="1"/>
</dbReference>
<dbReference type="InterPro" id="IPR023010">
    <property type="entry name" value="GcvPA"/>
</dbReference>
<dbReference type="InterPro" id="IPR049315">
    <property type="entry name" value="GDC-P_N"/>
</dbReference>
<dbReference type="InterPro" id="IPR015424">
    <property type="entry name" value="PyrdxlP-dep_Trfase"/>
</dbReference>
<dbReference type="InterPro" id="IPR015421">
    <property type="entry name" value="PyrdxlP-dep_Trfase_major"/>
</dbReference>
<dbReference type="InterPro" id="IPR015422">
    <property type="entry name" value="PyrdxlP-dep_Trfase_small"/>
</dbReference>
<dbReference type="NCBIfam" id="NF001696">
    <property type="entry name" value="PRK00451.1"/>
    <property type="match status" value="1"/>
</dbReference>
<dbReference type="PANTHER" id="PTHR42806">
    <property type="entry name" value="GLYCINE CLEAVAGE SYSTEM P-PROTEIN"/>
    <property type="match status" value="1"/>
</dbReference>
<dbReference type="PANTHER" id="PTHR42806:SF1">
    <property type="entry name" value="GLYCINE DEHYDROGENASE (DECARBOXYLATING)"/>
    <property type="match status" value="1"/>
</dbReference>
<dbReference type="Pfam" id="PF02347">
    <property type="entry name" value="GDC-P"/>
    <property type="match status" value="1"/>
</dbReference>
<dbReference type="PIRSF" id="PIRSF006815">
    <property type="entry name" value="GcvPA"/>
    <property type="match status" value="1"/>
</dbReference>
<dbReference type="SUPFAM" id="SSF53383">
    <property type="entry name" value="PLP-dependent transferases"/>
    <property type="match status" value="1"/>
</dbReference>
<feature type="chain" id="PRO_0000166992" description="Probable glycine dehydrogenase (decarboxylating) subunit 1">
    <location>
        <begin position="1"/>
        <end position="434"/>
    </location>
</feature>
<organism>
    <name type="scientific">Thermoplasma volcanium (strain ATCC 51530 / DSM 4299 / JCM 9571 / NBRC 15438 / GSS1)</name>
    <dbReference type="NCBI Taxonomy" id="273116"/>
    <lineage>
        <taxon>Archaea</taxon>
        <taxon>Methanobacteriati</taxon>
        <taxon>Thermoplasmatota</taxon>
        <taxon>Thermoplasmata</taxon>
        <taxon>Thermoplasmatales</taxon>
        <taxon>Thermoplasmataceae</taxon>
        <taxon>Thermoplasma</taxon>
    </lineage>
</organism>
<comment type="function">
    <text evidence="1">The glycine cleavage system catalyzes the degradation of glycine. The P protein binds the alpha-amino group of glycine through its pyridoxal phosphate cofactor; CO(2) is released and the remaining methylamine moiety is then transferred to the lipoamide cofactor of the H protein.</text>
</comment>
<comment type="catalytic activity">
    <reaction evidence="1">
        <text>N(6)-[(R)-lipoyl]-L-lysyl-[glycine-cleavage complex H protein] + glycine + H(+) = N(6)-[(R)-S(8)-aminomethyldihydrolipoyl]-L-lysyl-[glycine-cleavage complex H protein] + CO2</text>
        <dbReference type="Rhea" id="RHEA:24304"/>
        <dbReference type="Rhea" id="RHEA-COMP:10494"/>
        <dbReference type="Rhea" id="RHEA-COMP:10495"/>
        <dbReference type="ChEBI" id="CHEBI:15378"/>
        <dbReference type="ChEBI" id="CHEBI:16526"/>
        <dbReference type="ChEBI" id="CHEBI:57305"/>
        <dbReference type="ChEBI" id="CHEBI:83099"/>
        <dbReference type="ChEBI" id="CHEBI:83143"/>
        <dbReference type="EC" id="1.4.4.2"/>
    </reaction>
</comment>
<comment type="subunit">
    <text evidence="1">The glycine cleavage system is composed of four proteins: P, T, L and H. In this organism, the P 'protein' is a heterodimer of two subunits.</text>
</comment>
<comment type="similarity">
    <text evidence="1">Belongs to the GcvP family. N-terminal subunit subfamily.</text>
</comment>
<protein>
    <recommendedName>
        <fullName evidence="1">Probable glycine dehydrogenase (decarboxylating) subunit 1</fullName>
        <ecNumber evidence="1">1.4.4.2</ecNumber>
    </recommendedName>
    <alternativeName>
        <fullName evidence="1">Glycine cleavage system P-protein subunit 1</fullName>
    </alternativeName>
    <alternativeName>
        <fullName evidence="1">Glycine decarboxylase subunit 1</fullName>
    </alternativeName>
    <alternativeName>
        <fullName evidence="1">Glycine dehydrogenase (aminomethyl-transferring) subunit 1</fullName>
    </alternativeName>
</protein>
<evidence type="ECO:0000255" key="1">
    <source>
        <dbReference type="HAMAP-Rule" id="MF_00712"/>
    </source>
</evidence>
<name>GCSPA_THEVO</name>
<proteinExistence type="inferred from homology"/>
<keyword id="KW-0560">Oxidoreductase</keyword>
<sequence>MDEISSMLDYLGIKSTEELFSDIPLSVRKKEIGIGSPLDEHLVLERARKYASLNSTEMLNFLGNGIYDRVIPEAVNYIISKSEFLDSYTPYQPEVSQGMLQSIFEYQSLISDLFKMDFTNASMYDGYSALGEAARMAYRINGKNKILIPESTYDSKLSVLKNYVWGLSMKIEKYKMNEEGKIDIDDLQSRIDGDTSAVVVENPNGYGVIDENVFRISEIKKESLLISYVDPISLGVLKPPGEYGSDIAIAEGQQLGIPMNFGGPLLGIMSFKADYVRKSPGRLIGESVDADGKRAFVMTLQTREQHIRRAKATSNICSNQALLTLAAGSYLSILGSSGLKKVALLTIKHSKNLAESLGNIGIEKVFDSISFSDTLFRIDKNVMLDLAKKGILGGIKLTSLIKDSKYSSGTFFTATEKTDNEKIKALVNALEVIM</sequence>
<accession>Q97C05</accession>
<reference key="1">
    <citation type="journal article" date="2000" name="Proc. Natl. Acad. Sci. U.S.A.">
        <title>Archaeal adaptation to higher temperatures revealed by genomic sequence of Thermoplasma volcanium.</title>
        <authorList>
            <person name="Kawashima T."/>
            <person name="Amano N."/>
            <person name="Koike H."/>
            <person name="Makino S."/>
            <person name="Higuchi S."/>
            <person name="Kawashima-Ohya Y."/>
            <person name="Watanabe K."/>
            <person name="Yamazaki M."/>
            <person name="Kanehori K."/>
            <person name="Kawamoto T."/>
            <person name="Nunoshiba T."/>
            <person name="Yamamoto Y."/>
            <person name="Aramaki H."/>
            <person name="Makino K."/>
            <person name="Suzuki M."/>
        </authorList>
    </citation>
    <scope>NUCLEOTIDE SEQUENCE [LARGE SCALE GENOMIC DNA]</scope>
    <source>
        <strain>ATCC 51530 / DSM 4299 / JCM 9571 / NBRC 15438 / GSS1</strain>
    </source>
</reference>
<gene>
    <name evidence="1" type="primary">gcvPA</name>
    <name type="ordered locus">TV0300</name>
    <name type="ORF">TVG0309943</name>
</gene>